<protein>
    <recommendedName>
        <fullName>Uncharacterized protein MT2969</fullName>
    </recommendedName>
</protein>
<feature type="chain" id="PRO_0000427552" description="Uncharacterized protein MT2969">
    <location>
        <begin position="1"/>
        <end position="101"/>
    </location>
</feature>
<dbReference type="EMBL" id="AE000516">
    <property type="protein sequence ID" value="AAK47295.1"/>
    <property type="molecule type" value="Genomic_DNA"/>
</dbReference>
<dbReference type="PIR" id="H70926">
    <property type="entry name" value="H70926"/>
</dbReference>
<dbReference type="RefSeq" id="WP_003414710.1">
    <property type="nucleotide sequence ID" value="NZ_KK341227.1"/>
</dbReference>
<dbReference type="KEGG" id="mtc:MT2969"/>
<dbReference type="PATRIC" id="fig|83331.31.peg.3209"/>
<dbReference type="HOGENOM" id="CLU_148679_0_0_11"/>
<dbReference type="Proteomes" id="UP000001020">
    <property type="component" value="Chromosome"/>
</dbReference>
<dbReference type="InterPro" id="IPR019592">
    <property type="entry name" value="DUF2469"/>
</dbReference>
<dbReference type="Pfam" id="PF10611">
    <property type="entry name" value="DUF2469"/>
    <property type="match status" value="1"/>
</dbReference>
<proteinExistence type="predicted"/>
<name>Y2901_MYCTO</name>
<accession>P9WL26</accession>
<accession>L0TDQ0</accession>
<accession>P65051</accession>
<accession>Q10822</accession>
<organism>
    <name type="scientific">Mycobacterium tuberculosis (strain CDC 1551 / Oshkosh)</name>
    <dbReference type="NCBI Taxonomy" id="83331"/>
    <lineage>
        <taxon>Bacteria</taxon>
        <taxon>Bacillati</taxon>
        <taxon>Actinomycetota</taxon>
        <taxon>Actinomycetes</taxon>
        <taxon>Mycobacteriales</taxon>
        <taxon>Mycobacteriaceae</taxon>
        <taxon>Mycobacterium</taxon>
        <taxon>Mycobacterium tuberculosis complex</taxon>
    </lineage>
</organism>
<sequence>MSAEDLEKYETEMELSLYREYKDIVGQFSYVVETERRFYLANSVEMVPRNTDGEVYFELRLADAWVWDMYRPARFVKQVRVVTFKDVNIEEVEKPELRLPE</sequence>
<reference key="1">
    <citation type="journal article" date="2002" name="J. Bacteriol.">
        <title>Whole-genome comparison of Mycobacterium tuberculosis clinical and laboratory strains.</title>
        <authorList>
            <person name="Fleischmann R.D."/>
            <person name="Alland D."/>
            <person name="Eisen J.A."/>
            <person name="Carpenter L."/>
            <person name="White O."/>
            <person name="Peterson J.D."/>
            <person name="DeBoy R.T."/>
            <person name="Dodson R.J."/>
            <person name="Gwinn M.L."/>
            <person name="Haft D.H."/>
            <person name="Hickey E.K."/>
            <person name="Kolonay J.F."/>
            <person name="Nelson W.C."/>
            <person name="Umayam L.A."/>
            <person name="Ermolaeva M.D."/>
            <person name="Salzberg S.L."/>
            <person name="Delcher A."/>
            <person name="Utterback T.R."/>
            <person name="Weidman J.F."/>
            <person name="Khouri H.M."/>
            <person name="Gill J."/>
            <person name="Mikula A."/>
            <person name="Bishai W."/>
            <person name="Jacobs W.R. Jr."/>
            <person name="Venter J.C."/>
            <person name="Fraser C.M."/>
        </authorList>
    </citation>
    <scope>NUCLEOTIDE SEQUENCE [LARGE SCALE GENOMIC DNA]</scope>
    <source>
        <strain>CDC 1551 / Oshkosh</strain>
    </source>
</reference>
<gene>
    <name type="ordered locus">MT2969</name>
</gene>
<keyword id="KW-1185">Reference proteome</keyword>